<dbReference type="EMBL" id="U04049">
    <property type="protein sequence ID" value="AAB38373.1"/>
    <property type="molecule type" value="mRNA"/>
</dbReference>
<dbReference type="EMBL" id="X58479">
    <property type="protein sequence ID" value="CAA41388.1"/>
    <property type="molecule type" value="mRNA"/>
</dbReference>
<dbReference type="PIR" id="A33620">
    <property type="entry name" value="A33620"/>
</dbReference>
<dbReference type="RefSeq" id="NP_990494.1">
    <property type="nucleotide sequence ID" value="NM_205163.1"/>
</dbReference>
<dbReference type="SMR" id="P47807"/>
<dbReference type="STRING" id="9031.ENSGALP00000066494"/>
<dbReference type="PaxDb" id="9031-ENSGALP00000007526"/>
<dbReference type="GeneID" id="396072"/>
<dbReference type="KEGG" id="gga:396072"/>
<dbReference type="CTD" id="4640"/>
<dbReference type="VEuPathDB" id="HostDB:geneid_396072"/>
<dbReference type="eggNOG" id="KOG0164">
    <property type="taxonomic scope" value="Eukaryota"/>
</dbReference>
<dbReference type="InParanoid" id="P47807"/>
<dbReference type="OrthoDB" id="10055605at2759"/>
<dbReference type="PhylomeDB" id="P47807"/>
<dbReference type="PRO" id="PR:P47807"/>
<dbReference type="Proteomes" id="UP000000539">
    <property type="component" value="Unassembled WGS sequence"/>
</dbReference>
<dbReference type="GO" id="GO:0015629">
    <property type="term" value="C:actin cytoskeleton"/>
    <property type="evidence" value="ECO:0000318"/>
    <property type="project" value="GO_Central"/>
</dbReference>
<dbReference type="GO" id="GO:0005884">
    <property type="term" value="C:actin filament"/>
    <property type="evidence" value="ECO:0000314"/>
    <property type="project" value="UniProtKB"/>
</dbReference>
<dbReference type="GO" id="GO:0005903">
    <property type="term" value="C:brush border"/>
    <property type="evidence" value="ECO:0000318"/>
    <property type="project" value="GO_Central"/>
</dbReference>
<dbReference type="GO" id="GO:0005737">
    <property type="term" value="C:cytoplasm"/>
    <property type="evidence" value="ECO:0000314"/>
    <property type="project" value="UniProtKB"/>
</dbReference>
<dbReference type="GO" id="GO:0030027">
    <property type="term" value="C:lamellipodium"/>
    <property type="evidence" value="ECO:0000314"/>
    <property type="project" value="UniProtKB"/>
</dbReference>
<dbReference type="GO" id="GO:0016328">
    <property type="term" value="C:lateral plasma membrane"/>
    <property type="evidence" value="ECO:0000314"/>
    <property type="project" value="UniProtKB"/>
</dbReference>
<dbReference type="GO" id="GO:0005902">
    <property type="term" value="C:microvillus"/>
    <property type="evidence" value="ECO:0000314"/>
    <property type="project" value="UniProtKB"/>
</dbReference>
<dbReference type="GO" id="GO:0016459">
    <property type="term" value="C:myosin complex"/>
    <property type="evidence" value="ECO:0007669"/>
    <property type="project" value="UniProtKB-KW"/>
</dbReference>
<dbReference type="GO" id="GO:0005886">
    <property type="term" value="C:plasma membrane"/>
    <property type="evidence" value="ECO:0000318"/>
    <property type="project" value="GO_Central"/>
</dbReference>
<dbReference type="GO" id="GO:0051015">
    <property type="term" value="F:actin filament binding"/>
    <property type="evidence" value="ECO:0000318"/>
    <property type="project" value="GO_Central"/>
</dbReference>
<dbReference type="GO" id="GO:0005524">
    <property type="term" value="F:ATP binding"/>
    <property type="evidence" value="ECO:0007669"/>
    <property type="project" value="UniProtKB-KW"/>
</dbReference>
<dbReference type="GO" id="GO:0005516">
    <property type="term" value="F:calmodulin binding"/>
    <property type="evidence" value="ECO:0007669"/>
    <property type="project" value="UniProtKB-KW"/>
</dbReference>
<dbReference type="GO" id="GO:0000146">
    <property type="term" value="F:microfilament motor activity"/>
    <property type="evidence" value="ECO:0000314"/>
    <property type="project" value="UniProtKB"/>
</dbReference>
<dbReference type="GO" id="GO:0007015">
    <property type="term" value="P:actin filament organization"/>
    <property type="evidence" value="ECO:0000318"/>
    <property type="project" value="GO_Central"/>
</dbReference>
<dbReference type="GO" id="GO:0030048">
    <property type="term" value="P:actin filament-based movement"/>
    <property type="evidence" value="ECO:0000314"/>
    <property type="project" value="UniProtKB"/>
</dbReference>
<dbReference type="GO" id="GO:0006897">
    <property type="term" value="P:endocytosis"/>
    <property type="evidence" value="ECO:0000318"/>
    <property type="project" value="GO_Central"/>
</dbReference>
<dbReference type="GO" id="GO:0016197">
    <property type="term" value="P:endosomal transport"/>
    <property type="evidence" value="ECO:0000315"/>
    <property type="project" value="UniProtKB"/>
</dbReference>
<dbReference type="GO" id="GO:0007605">
    <property type="term" value="P:sensory perception of sound"/>
    <property type="evidence" value="ECO:0000318"/>
    <property type="project" value="GO_Central"/>
</dbReference>
<dbReference type="GO" id="GO:0045056">
    <property type="term" value="P:transcytosis"/>
    <property type="evidence" value="ECO:0000315"/>
    <property type="project" value="UniProtKB"/>
</dbReference>
<dbReference type="CDD" id="cd23767">
    <property type="entry name" value="IQCD"/>
    <property type="match status" value="1"/>
</dbReference>
<dbReference type="CDD" id="cd01378">
    <property type="entry name" value="MYSc_Myo1"/>
    <property type="match status" value="1"/>
</dbReference>
<dbReference type="FunFam" id="1.20.5.4820:FF:000013">
    <property type="entry name" value="LOW QUALITY PROTEIN: unconventional myosin-Ib"/>
    <property type="match status" value="1"/>
</dbReference>
<dbReference type="FunFam" id="1.10.10.820:FF:000001">
    <property type="entry name" value="Myosin heavy chain"/>
    <property type="match status" value="1"/>
</dbReference>
<dbReference type="FunFam" id="1.20.58.530:FF:000004">
    <property type="entry name" value="Unconventional myosin ID"/>
    <property type="match status" value="1"/>
</dbReference>
<dbReference type="FunFam" id="1.20.5.190:FF:000043">
    <property type="entry name" value="unconventional myosin-Ia isoform X1"/>
    <property type="match status" value="1"/>
</dbReference>
<dbReference type="Gene3D" id="1.10.10.820">
    <property type="match status" value="1"/>
</dbReference>
<dbReference type="Gene3D" id="1.20.5.190">
    <property type="match status" value="1"/>
</dbReference>
<dbReference type="Gene3D" id="1.20.5.4820">
    <property type="match status" value="1"/>
</dbReference>
<dbReference type="Gene3D" id="1.20.58.530">
    <property type="match status" value="1"/>
</dbReference>
<dbReference type="Gene3D" id="3.40.850.10">
    <property type="entry name" value="Kinesin motor domain"/>
    <property type="match status" value="1"/>
</dbReference>
<dbReference type="Gene3D" id="1.20.120.720">
    <property type="entry name" value="Myosin VI head, motor domain, U50 subdomain"/>
    <property type="match status" value="1"/>
</dbReference>
<dbReference type="InterPro" id="IPR000048">
    <property type="entry name" value="IQ_motif_EF-hand-BS"/>
</dbReference>
<dbReference type="InterPro" id="IPR036961">
    <property type="entry name" value="Kinesin_motor_dom_sf"/>
</dbReference>
<dbReference type="InterPro" id="IPR001609">
    <property type="entry name" value="Myosin_head_motor_dom-like"/>
</dbReference>
<dbReference type="InterPro" id="IPR010926">
    <property type="entry name" value="Myosin_TH1"/>
</dbReference>
<dbReference type="InterPro" id="IPR036072">
    <property type="entry name" value="MYSc_Myo1"/>
</dbReference>
<dbReference type="InterPro" id="IPR027417">
    <property type="entry name" value="P-loop_NTPase"/>
</dbReference>
<dbReference type="PANTHER" id="PTHR13140">
    <property type="entry name" value="MYOSIN"/>
    <property type="match status" value="1"/>
</dbReference>
<dbReference type="PANTHER" id="PTHR13140:SF291">
    <property type="entry name" value="UNCONVENTIONAL MYOSIN-IA"/>
    <property type="match status" value="1"/>
</dbReference>
<dbReference type="Pfam" id="PF00612">
    <property type="entry name" value="IQ"/>
    <property type="match status" value="3"/>
</dbReference>
<dbReference type="Pfam" id="PF00063">
    <property type="entry name" value="Myosin_head"/>
    <property type="match status" value="1"/>
</dbReference>
<dbReference type="Pfam" id="PF06017">
    <property type="entry name" value="Myosin_TH1"/>
    <property type="match status" value="1"/>
</dbReference>
<dbReference type="PRINTS" id="PR00193">
    <property type="entry name" value="MYOSINHEAVY"/>
</dbReference>
<dbReference type="SMART" id="SM00015">
    <property type="entry name" value="IQ"/>
    <property type="match status" value="3"/>
</dbReference>
<dbReference type="SMART" id="SM00242">
    <property type="entry name" value="MYSc"/>
    <property type="match status" value="1"/>
</dbReference>
<dbReference type="SUPFAM" id="SSF52540">
    <property type="entry name" value="P-loop containing nucleoside triphosphate hydrolases"/>
    <property type="match status" value="1"/>
</dbReference>
<dbReference type="PROSITE" id="PS50096">
    <property type="entry name" value="IQ"/>
    <property type="match status" value="3"/>
</dbReference>
<dbReference type="PROSITE" id="PS51456">
    <property type="entry name" value="MYOSIN_MOTOR"/>
    <property type="match status" value="1"/>
</dbReference>
<dbReference type="PROSITE" id="PS51757">
    <property type="entry name" value="TH1"/>
    <property type="match status" value="1"/>
</dbReference>
<gene>
    <name type="primary">MYO1A</name>
    <name type="synonym">MYHL</name>
</gene>
<accession>P47807</accession>
<accession>Q90573</accession>
<proteinExistence type="evidence at protein level"/>
<evidence type="ECO:0000255" key="1"/>
<evidence type="ECO:0000255" key="2">
    <source>
        <dbReference type="PROSITE-ProRule" id="PRU00116"/>
    </source>
</evidence>
<evidence type="ECO:0000255" key="3">
    <source>
        <dbReference type="PROSITE-ProRule" id="PRU00782"/>
    </source>
</evidence>
<evidence type="ECO:0000255" key="4">
    <source>
        <dbReference type="PROSITE-ProRule" id="PRU01093"/>
    </source>
</evidence>
<evidence type="ECO:0000305" key="5"/>
<name>MYO1A_CHICK</name>
<sequence length="1045" mass="119277">MEATTSLLDAAAVGDLVMLDPLSEESLLRTLQERFSRGEIYTYIGEVVISVNPYKPLPIYTPEKVEEYHNCNFFAVKPHIYAIADDAYRSLRDRDRDQCILITGESGAGKTEASKLVMSYVAAVSSKGEEVDKVKEQLLQSNPVLEAFGNAKTIRNDNSSRFGKYMDVEFDFKGDPLGGVISNYLLEKSRIVRHVKGERNFHIFYQLLAGGSAQLLQQLKLRPDCSHYGYLNHEKSVLPGMDDAANFRAMQDAMAIIGFAPAEVTALLEVTAVVLKLGNVKLSSCFQASGMEASSITEPRELQEISQLIGLDPSTLEQALCSRTVKVRDESVLTALSVSQGYYGRDALAKNIYSRLFDWLVNRINTSIQVKPGKQRKVMGVLDIYGFEIFQDNGFEQFIINYCNEKLQQIFILMTLKEEQEEYVREGIQWTPVEFFDNSIICDLIENSKVGILAMLDEECLRPGTVNEDTFITKLNQIFASHKRYESKETLNAKHVTDVSLPLRCFRIHHYAGKVTYNVTGFIEKNNDLLFRDLSQAMWAARHTLLRSLFPEGDPQRPSLKLPPTTGSQFKASVATLMKNLYSKNPNYIRCIKPNDTKTAMLFTPDLVLAQVRYLGLMENVRVRRAGYAFRQLYQPFLERYKMLSRKTWPRWTGGDREGAEVLLAELKFPPEELAYGHTKIFIRSPRTLFDLEKRRQQRVAELATLIQKMFRGWCCRKRYQLMRKSQILISAWFRGHMQRNRYKQMKRSVLLLQAYARGWKTRRMYRRYFRSDACTRLSNFIYRRMVQKYLMGLQKNLPPMAVLDRTWPPAPYKFLSDANQELKSIFYRWKCKKYREQLTPQQRAMLQAKLCASELFKDKKALYAQSLQQPFRGEYLGLTQNRKYQKLQAVAKDKLVMAEAVQKVNRANGKTVPRLLLLTTEHLVLADPKAAQPKMVLSLCDIQGASVSRFSDGLLALHLKETSTAGGKGDLLLVSPHLIELVTRLHQTLMDATAQALPLSIADQFSTRFPKGDVAVTVVESAKGGGDVPVCKKRGSHKMEILVH</sequence>
<protein>
    <recommendedName>
        <fullName>Unconventional myosin-Ia</fullName>
    </recommendedName>
    <alternativeName>
        <fullName>Brush border myosin I</fullName>
        <shortName>BBM-I</shortName>
        <shortName>BBMI</shortName>
    </alternativeName>
    <alternativeName>
        <fullName>Myosin I heavy chain</fullName>
        <shortName>MIHC</shortName>
    </alternativeName>
</protein>
<keyword id="KW-0009">Actin-binding</keyword>
<keyword id="KW-0067">ATP-binding</keyword>
<keyword id="KW-0112">Calmodulin-binding</keyword>
<keyword id="KW-0903">Direct protein sequencing</keyword>
<keyword id="KW-0505">Motor protein</keyword>
<keyword id="KW-0518">Myosin</keyword>
<keyword id="KW-0547">Nucleotide-binding</keyword>
<keyword id="KW-1185">Reference proteome</keyword>
<keyword id="KW-0677">Repeat</keyword>
<organism>
    <name type="scientific">Gallus gallus</name>
    <name type="common">Chicken</name>
    <dbReference type="NCBI Taxonomy" id="9031"/>
    <lineage>
        <taxon>Eukaryota</taxon>
        <taxon>Metazoa</taxon>
        <taxon>Chordata</taxon>
        <taxon>Craniata</taxon>
        <taxon>Vertebrata</taxon>
        <taxon>Euteleostomi</taxon>
        <taxon>Archelosauria</taxon>
        <taxon>Archosauria</taxon>
        <taxon>Dinosauria</taxon>
        <taxon>Saurischia</taxon>
        <taxon>Theropoda</taxon>
        <taxon>Coelurosauria</taxon>
        <taxon>Aves</taxon>
        <taxon>Neognathae</taxon>
        <taxon>Galloanserae</taxon>
        <taxon>Galliformes</taxon>
        <taxon>Phasianidae</taxon>
        <taxon>Phasianinae</taxon>
        <taxon>Gallus</taxon>
    </lineage>
</organism>
<comment type="function">
    <text>Could play an important role in morphogenesis and function of intestinal microvilli.</text>
</comment>
<comment type="tissue specificity">
    <text>Intestine.</text>
</comment>
<comment type="similarity">
    <text evidence="5">Belongs to the TRAFAC class myosin-kinesin ATPase superfamily. Myosin family.</text>
</comment>
<comment type="caution">
    <text evidence="5">Represents an unconventional myosin. This protein should not be confused with the conventional myosin-1 (MYH1).</text>
</comment>
<feature type="chain" id="PRO_0000123441" description="Unconventional myosin-Ia">
    <location>
        <begin position="1"/>
        <end position="1045"/>
    </location>
</feature>
<feature type="domain" description="Myosin motor" evidence="3">
    <location>
        <begin position="11"/>
        <end position="697"/>
    </location>
</feature>
<feature type="domain" description="IQ 1" evidence="2">
    <location>
        <begin position="701"/>
        <end position="727"/>
    </location>
</feature>
<feature type="domain" description="IQ 2" evidence="2">
    <location>
        <begin position="723"/>
        <end position="750"/>
    </location>
</feature>
<feature type="domain" description="IQ 3" evidence="2">
    <location>
        <begin position="746"/>
        <end position="774"/>
    </location>
</feature>
<feature type="domain" description="TH1" evidence="4">
    <location>
        <begin position="861"/>
        <end position="1044"/>
    </location>
</feature>
<feature type="region of interest" description="Actin-binding" evidence="1">
    <location>
        <begin position="574"/>
        <end position="596"/>
    </location>
</feature>
<feature type="binding site" evidence="1">
    <location>
        <begin position="104"/>
        <end position="111"/>
    </location>
    <ligand>
        <name>ATP</name>
        <dbReference type="ChEBI" id="CHEBI:30616"/>
    </ligand>
</feature>
<feature type="sequence conflict" description="In Ref. 2; CAA41388." evidence="5" ref="2">
    <original>E</original>
    <variation>Q</variation>
    <location>
        <position position="46"/>
    </location>
</feature>
<feature type="sequence conflict" description="In Ref. 2; CAA41388." evidence="5" ref="2">
    <original>C</original>
    <variation>S</variation>
    <location>
        <position position="285"/>
    </location>
</feature>
<feature type="sequence conflict" description="In Ref. 2; CAA41388." evidence="5" ref="2">
    <original>T</original>
    <variation>A</variation>
    <location>
        <position position="297"/>
    </location>
</feature>
<feature type="sequence conflict" description="In Ref. 2; CAA41388." evidence="5" ref="2">
    <original>G</original>
    <variation>A</variation>
    <location>
        <position position="427"/>
    </location>
</feature>
<feature type="sequence conflict" description="In Ref. 2; CAA41388." evidence="5" ref="2">
    <original>CASE</original>
    <variation>WPRQ</variation>
    <location>
        <begin position="852"/>
        <end position="855"/>
    </location>
</feature>
<reference key="1">
    <citation type="journal article" date="1995" name="Cell Motil. Cytoskeleton">
        <title>Recombinant expression of the brush border myosin I heavy chain.</title>
        <authorList>
            <person name="Collins K."/>
            <person name="Matsudaira P.T."/>
        </authorList>
    </citation>
    <scope>NUCLEOTIDE SEQUENCE [MRNA]</scope>
</reference>
<reference key="2">
    <citation type="journal article" date="1989" name="J. Cell Biol.">
        <title>Partial deduced sequence of the 110-kD-calmodulin complex of the avian intestinal microvillus shows that this mechanoenzyme is a member of the myosin I family.</title>
        <authorList>
            <person name="Garcia A."/>
            <person name="Coudrier E."/>
            <person name="Carboni J."/>
            <person name="Anderson J."/>
            <person name="Vandekerckhove J."/>
            <person name="Mooseker M."/>
            <person name="Louvard D."/>
            <person name="Arpin M."/>
        </authorList>
    </citation>
    <scope>NUCLEOTIDE SEQUENCE [MRNA] OF 46-1045</scope>
    <scope>PROTEIN SEQUENCE OF 332-343 AND 490-503</scope>
    <source>
        <tissue>Intestine</tissue>
    </source>
</reference>
<reference key="3">
    <citation type="journal article" date="1996" name="Structure">
        <title>A model of Ca(2+)-free calmodulin binding to unconventional myosins reveals how calmodulin acts as a regulatory switch.</title>
        <authorList>
            <person name="Houdusse A."/>
            <person name="Silver M."/>
            <person name="Cohen C."/>
        </authorList>
    </citation>
    <scope>3D-STRUCTURE MODELING OF 699-731</scope>
</reference>